<gene>
    <name type="primary">Gcm1</name>
</gene>
<comment type="function">
    <text evidence="2">Transcription factor involved in the control of expression of placental growth factor (PGF) and other placenta-specific genes. Binds to the trophoblast-specific element 2 (TSE2) of the aromatase gene enhancer. Binds to the SYDE1 promoter. Has a central role in mediating the differentiation of trophoblast cells along both the villous and extravillous pathways in placental development.</text>
</comment>
<comment type="subcellular location">
    <subcellularLocation>
        <location evidence="3">Nucleus</location>
    </subcellularLocation>
</comment>
<comment type="PTM">
    <text evidence="1">Polyubiquitinated in the presence of UBE2D2 and FBXW2 (in vitro).</text>
</comment>
<reference key="1">
    <citation type="journal article" date="1998" name="Proc. Natl. Acad. Sci. U.S.A.">
        <title>Isolation and characterization of mammalian homologs of the Drosophila gene glial cells missing.</title>
        <authorList>
            <person name="Kim J."/>
            <person name="Jones B.W."/>
            <person name="Zock C."/>
            <person name="Chen Z."/>
            <person name="Wang H."/>
            <person name="Goodman C.S."/>
            <person name="Anderson D.J."/>
        </authorList>
    </citation>
    <scope>NUCLEOTIDE SEQUENCE [MRNA]</scope>
</reference>
<dbReference type="EMBL" id="AF081557">
    <property type="protein sequence ID" value="AAC64783.1"/>
    <property type="molecule type" value="mRNA"/>
</dbReference>
<dbReference type="RefSeq" id="NP_058882.1">
    <property type="nucleotide sequence ID" value="NM_017186.2"/>
</dbReference>
<dbReference type="SMR" id="Q9Z288"/>
<dbReference type="FunCoup" id="Q9Z288">
    <property type="interactions" value="9"/>
</dbReference>
<dbReference type="STRING" id="10116.ENSRNOP00000010583"/>
<dbReference type="iPTMnet" id="Q9Z288"/>
<dbReference type="PhosphoSitePlus" id="Q9Z288"/>
<dbReference type="PaxDb" id="10116-ENSRNOP00000010583"/>
<dbReference type="Ensembl" id="ENSRNOT00000010583.3">
    <property type="protein sequence ID" value="ENSRNOP00000010583.1"/>
    <property type="gene ID" value="ENSRNOG00000007932.3"/>
</dbReference>
<dbReference type="GeneID" id="29394"/>
<dbReference type="KEGG" id="rno:29394"/>
<dbReference type="UCSC" id="RGD:61852">
    <property type="organism name" value="rat"/>
</dbReference>
<dbReference type="AGR" id="RGD:61852"/>
<dbReference type="CTD" id="8521"/>
<dbReference type="RGD" id="61852">
    <property type="gene designation" value="Gcm1"/>
</dbReference>
<dbReference type="eggNOG" id="ENOG502QWH2">
    <property type="taxonomic scope" value="Eukaryota"/>
</dbReference>
<dbReference type="GeneTree" id="ENSGT00390000006777"/>
<dbReference type="HOGENOM" id="CLU_043105_0_0_1"/>
<dbReference type="InParanoid" id="Q9Z288"/>
<dbReference type="OMA" id="FPLTNWP"/>
<dbReference type="OrthoDB" id="6241117at2759"/>
<dbReference type="PhylomeDB" id="Q9Z288"/>
<dbReference type="TreeFam" id="TF324146"/>
<dbReference type="PRO" id="PR:Q9Z288"/>
<dbReference type="Proteomes" id="UP000002494">
    <property type="component" value="Chromosome 8"/>
</dbReference>
<dbReference type="Bgee" id="ENSRNOG00000007932">
    <property type="expression patterns" value="Expressed in kidney and 2 other cell types or tissues"/>
</dbReference>
<dbReference type="GO" id="GO:0005634">
    <property type="term" value="C:nucleus"/>
    <property type="evidence" value="ECO:0000266"/>
    <property type="project" value="RGD"/>
</dbReference>
<dbReference type="GO" id="GO:0005667">
    <property type="term" value="C:transcription regulator complex"/>
    <property type="evidence" value="ECO:0000266"/>
    <property type="project" value="RGD"/>
</dbReference>
<dbReference type="GO" id="GO:0003677">
    <property type="term" value="F:DNA binding"/>
    <property type="evidence" value="ECO:0000266"/>
    <property type="project" value="RGD"/>
</dbReference>
<dbReference type="GO" id="GO:0001228">
    <property type="term" value="F:DNA-binding transcription activator activity, RNA polymerase II-specific"/>
    <property type="evidence" value="ECO:0000266"/>
    <property type="project" value="RGD"/>
</dbReference>
<dbReference type="GO" id="GO:0003700">
    <property type="term" value="F:DNA-binding transcription factor activity"/>
    <property type="evidence" value="ECO:0000266"/>
    <property type="project" value="RGD"/>
</dbReference>
<dbReference type="GO" id="GO:0000981">
    <property type="term" value="F:DNA-binding transcription factor activity, RNA polymerase II-specific"/>
    <property type="evidence" value="ECO:0000266"/>
    <property type="project" value="RGD"/>
</dbReference>
<dbReference type="GO" id="GO:0042826">
    <property type="term" value="F:histone deacetylase binding"/>
    <property type="evidence" value="ECO:0000266"/>
    <property type="project" value="RGD"/>
</dbReference>
<dbReference type="GO" id="GO:0000978">
    <property type="term" value="F:RNA polymerase II cis-regulatory region sequence-specific DNA binding"/>
    <property type="evidence" value="ECO:0000266"/>
    <property type="project" value="RGD"/>
</dbReference>
<dbReference type="GO" id="GO:1990837">
    <property type="term" value="F:sequence-specific double-stranded DNA binding"/>
    <property type="evidence" value="ECO:0000266"/>
    <property type="project" value="RGD"/>
</dbReference>
<dbReference type="GO" id="GO:0008270">
    <property type="term" value="F:zinc ion binding"/>
    <property type="evidence" value="ECO:0000266"/>
    <property type="project" value="RGD"/>
</dbReference>
<dbReference type="GO" id="GO:0060018">
    <property type="term" value="P:astrocyte fate commitment"/>
    <property type="evidence" value="ECO:0000266"/>
    <property type="project" value="RGD"/>
</dbReference>
<dbReference type="GO" id="GO:0060670">
    <property type="term" value="P:branching involved in labyrinthine layer morphogenesis"/>
    <property type="evidence" value="ECO:0000266"/>
    <property type="project" value="RGD"/>
</dbReference>
<dbReference type="GO" id="GO:0060706">
    <property type="term" value="P:cell differentiation involved in embryonic placenta development"/>
    <property type="evidence" value="ECO:0000266"/>
    <property type="project" value="RGD"/>
</dbReference>
<dbReference type="GO" id="GO:0042063">
    <property type="term" value="P:gliogenesis"/>
    <property type="evidence" value="ECO:0000318"/>
    <property type="project" value="GO_Central"/>
</dbReference>
<dbReference type="GO" id="GO:0045893">
    <property type="term" value="P:positive regulation of DNA-templated transcription"/>
    <property type="evidence" value="ECO:0000266"/>
    <property type="project" value="RGD"/>
</dbReference>
<dbReference type="GO" id="GO:0060143">
    <property type="term" value="P:positive regulation of syncytium formation by plasma membrane fusion"/>
    <property type="evidence" value="ECO:0000266"/>
    <property type="project" value="RGD"/>
</dbReference>
<dbReference type="GO" id="GO:0045944">
    <property type="term" value="P:positive regulation of transcription by RNA polymerase II"/>
    <property type="evidence" value="ECO:0000266"/>
    <property type="project" value="RGD"/>
</dbReference>
<dbReference type="GO" id="GO:0060800">
    <property type="term" value="P:regulation of cell differentiation involved in embryonic placenta development"/>
    <property type="evidence" value="ECO:0000266"/>
    <property type="project" value="RGD"/>
</dbReference>
<dbReference type="GO" id="GO:0006355">
    <property type="term" value="P:regulation of DNA-templated transcription"/>
    <property type="evidence" value="ECO:0000266"/>
    <property type="project" value="RGD"/>
</dbReference>
<dbReference type="GO" id="GO:0006357">
    <property type="term" value="P:regulation of transcription by RNA polymerase II"/>
    <property type="evidence" value="ECO:0000318"/>
    <property type="project" value="GO_Central"/>
</dbReference>
<dbReference type="GO" id="GO:0000768">
    <property type="term" value="P:syncytium formation by plasma membrane fusion"/>
    <property type="evidence" value="ECO:0000266"/>
    <property type="project" value="RGD"/>
</dbReference>
<dbReference type="GO" id="GO:0006366">
    <property type="term" value="P:transcription by RNA polymerase II"/>
    <property type="evidence" value="ECO:0000266"/>
    <property type="project" value="RGD"/>
</dbReference>
<dbReference type="FunFam" id="3.30.70.3530:FF:000001">
    <property type="entry name" value="Chorion-specific transcription factor GCMb"/>
    <property type="match status" value="1"/>
</dbReference>
<dbReference type="Gene3D" id="2.20.25.670">
    <property type="entry name" value="GCM domain, large subdomain"/>
    <property type="match status" value="1"/>
</dbReference>
<dbReference type="Gene3D" id="3.30.70.3530">
    <property type="entry name" value="GCM motif"/>
    <property type="match status" value="1"/>
</dbReference>
<dbReference type="InterPro" id="IPR039791">
    <property type="entry name" value="GCM"/>
</dbReference>
<dbReference type="InterPro" id="IPR036115">
    <property type="entry name" value="GCM_dom_sf"/>
</dbReference>
<dbReference type="InterPro" id="IPR043020">
    <property type="entry name" value="GCM_large"/>
</dbReference>
<dbReference type="InterPro" id="IPR043021">
    <property type="entry name" value="GCM_small"/>
</dbReference>
<dbReference type="InterPro" id="IPR003902">
    <property type="entry name" value="Tscrpt_reg_GCM"/>
</dbReference>
<dbReference type="PANTHER" id="PTHR12414:SF6">
    <property type="entry name" value="CHORION-SPECIFIC TRANSCRIPTION FACTOR GCMA"/>
    <property type="match status" value="1"/>
</dbReference>
<dbReference type="PANTHER" id="PTHR12414">
    <property type="entry name" value="GLIAL CELLS MISSING RELATED/GLIDE"/>
    <property type="match status" value="1"/>
</dbReference>
<dbReference type="Pfam" id="PF03615">
    <property type="entry name" value="GCM"/>
    <property type="match status" value="1"/>
</dbReference>
<dbReference type="SUPFAM" id="SSF90073">
    <property type="entry name" value="GCM domain"/>
    <property type="match status" value="1"/>
</dbReference>
<dbReference type="PROSITE" id="PS50807">
    <property type="entry name" value="GCM"/>
    <property type="match status" value="1"/>
</dbReference>
<sequence length="436" mass="49522">MELDDFDPEDKEILSWDINDMKLPQNVKKTDWFQEWPDSYVKHIYSSDDRSAQRHLSSWAMRNTNNHNSRILKKSCLGVVVCSRDCSTEEGRKIYLRPAICDKARQKQQRKSCPNCNGPLKLIPCRGHGGFPVTNFWRHDGRFIFFQSKGEHDHPRPETKLEAEARRAMKKVHMASASSSLRMKGRPEMKGLPGEIPSQGSLPLTWSFQEGVQLPSGYSTPLIANAPQQNSLNDCLSFPKSYDLGGTTELEDPTSTLDPTKLYERYKFSSSKVYSAEDQFQPPVPGVYGDYDEAQTWNKNAVLGRSPTDDTYYPPYPLPVASWPCDYLPSQSSLEHSPQQVPLEPPAAQPGHHPLWTNPGGEPYEEKVPVDFSSYVPSVTYHSPQQDPFLLAYGSHPQQQYALPGKSNRWDFDEEMACMGLDHFNNEMLLNLCSLK</sequence>
<evidence type="ECO:0000250" key="1"/>
<evidence type="ECO:0000250" key="2">
    <source>
        <dbReference type="UniProtKB" id="Q9NP62"/>
    </source>
</evidence>
<evidence type="ECO:0000255" key="3">
    <source>
        <dbReference type="PROSITE-ProRule" id="PRU00245"/>
    </source>
</evidence>
<protein>
    <recommendedName>
        <fullName>Chorion-specific transcription factor GCMa</fullName>
    </recommendedName>
    <alternativeName>
        <fullName>GCM motif protein 1</fullName>
    </alternativeName>
    <alternativeName>
        <fullName>Glial cells missing homolog 1</fullName>
    </alternativeName>
</protein>
<accession>Q9Z288</accession>
<organism>
    <name type="scientific">Rattus norvegicus</name>
    <name type="common">Rat</name>
    <dbReference type="NCBI Taxonomy" id="10116"/>
    <lineage>
        <taxon>Eukaryota</taxon>
        <taxon>Metazoa</taxon>
        <taxon>Chordata</taxon>
        <taxon>Craniata</taxon>
        <taxon>Vertebrata</taxon>
        <taxon>Euteleostomi</taxon>
        <taxon>Mammalia</taxon>
        <taxon>Eutheria</taxon>
        <taxon>Euarchontoglires</taxon>
        <taxon>Glires</taxon>
        <taxon>Rodentia</taxon>
        <taxon>Myomorpha</taxon>
        <taxon>Muroidea</taxon>
        <taxon>Muridae</taxon>
        <taxon>Murinae</taxon>
        <taxon>Rattus</taxon>
    </lineage>
</organism>
<proteinExistence type="evidence at transcript level"/>
<keyword id="KW-0217">Developmental protein</keyword>
<keyword id="KW-0238">DNA-binding</keyword>
<keyword id="KW-0479">Metal-binding</keyword>
<keyword id="KW-0539">Nucleus</keyword>
<keyword id="KW-1185">Reference proteome</keyword>
<keyword id="KW-0804">Transcription</keyword>
<keyword id="KW-0805">Transcription regulation</keyword>
<keyword id="KW-0832">Ubl conjugation</keyword>
<keyword id="KW-0862">Zinc</keyword>
<name>GCM1_RAT</name>
<feature type="chain" id="PRO_0000126649" description="Chorion-specific transcription factor GCMa">
    <location>
        <begin position="1"/>
        <end position="436"/>
    </location>
</feature>
<feature type="DNA-binding region" description="GCM" evidence="3">
    <location>
        <begin position="14"/>
        <end position="169"/>
    </location>
</feature>
<feature type="binding site" evidence="3">
    <location>
        <position position="76"/>
    </location>
    <ligand>
        <name>Zn(2+)</name>
        <dbReference type="ChEBI" id="CHEBI:29105"/>
        <label>1</label>
    </ligand>
</feature>
<feature type="binding site" evidence="3">
    <location>
        <position position="82"/>
    </location>
    <ligand>
        <name>Zn(2+)</name>
        <dbReference type="ChEBI" id="CHEBI:29105"/>
        <label>2</label>
    </ligand>
</feature>
<feature type="binding site" evidence="3">
    <location>
        <position position="86"/>
    </location>
    <ligand>
        <name>Zn(2+)</name>
        <dbReference type="ChEBI" id="CHEBI:29105"/>
        <label>2</label>
    </ligand>
</feature>
<feature type="binding site" evidence="3">
    <location>
        <position position="113"/>
    </location>
    <ligand>
        <name>Zn(2+)</name>
        <dbReference type="ChEBI" id="CHEBI:29105"/>
        <label>2</label>
    </ligand>
</feature>
<feature type="binding site" evidence="3">
    <location>
        <position position="116"/>
    </location>
    <ligand>
        <name>Zn(2+)</name>
        <dbReference type="ChEBI" id="CHEBI:29105"/>
        <label>2</label>
    </ligand>
</feature>
<feature type="binding site" evidence="3">
    <location>
        <position position="125"/>
    </location>
    <ligand>
        <name>Zn(2+)</name>
        <dbReference type="ChEBI" id="CHEBI:29105"/>
        <label>1</label>
    </ligand>
</feature>
<feature type="binding site" evidence="3">
    <location>
        <position position="152"/>
    </location>
    <ligand>
        <name>Zn(2+)</name>
        <dbReference type="ChEBI" id="CHEBI:29105"/>
        <label>1</label>
    </ligand>
</feature>
<feature type="binding site" evidence="3">
    <location>
        <position position="154"/>
    </location>
    <ligand>
        <name>Zn(2+)</name>
        <dbReference type="ChEBI" id="CHEBI:29105"/>
        <label>1</label>
    </ligand>
</feature>